<gene>
    <name evidence="1" type="primary">psbA</name>
</gene>
<comment type="function">
    <text evidence="1">Photosystem II (PSII) is a light-driven water:plastoquinone oxidoreductase that uses light energy to abstract electrons from H(2)O, generating O(2) and a proton gradient subsequently used for ATP formation. It consists of a core antenna complex that captures photons, and an electron transfer chain that converts photonic excitation into a charge separation. The D1/D2 (PsbA/PsbD) reaction center heterodimer binds P680, the primary electron donor of PSII as well as several subsequent electron acceptors.</text>
</comment>
<comment type="catalytic activity">
    <reaction evidence="1">
        <text>2 a plastoquinone + 4 hnu + 2 H2O = 2 a plastoquinol + O2</text>
        <dbReference type="Rhea" id="RHEA:36359"/>
        <dbReference type="Rhea" id="RHEA-COMP:9561"/>
        <dbReference type="Rhea" id="RHEA-COMP:9562"/>
        <dbReference type="ChEBI" id="CHEBI:15377"/>
        <dbReference type="ChEBI" id="CHEBI:15379"/>
        <dbReference type="ChEBI" id="CHEBI:17757"/>
        <dbReference type="ChEBI" id="CHEBI:30212"/>
        <dbReference type="ChEBI" id="CHEBI:62192"/>
        <dbReference type="EC" id="1.10.3.9"/>
    </reaction>
</comment>
<comment type="cofactor">
    <text evidence="1">The D1/D2 heterodimer binds P680, chlorophylls that are the primary electron donor of PSII, and subsequent electron acceptors. It shares a non-heme iron and each subunit binds pheophytin, quinone, additional chlorophylls, carotenoids and lipids. D1 provides most of the ligands for the Mn4-Ca-O5 cluster of the oxygen-evolving complex (OEC). There is also a Cl(-1) ion associated with D1 and D2, which is required for oxygen evolution. The PSII complex binds additional chlorophylls, carotenoids and specific lipids.</text>
</comment>
<comment type="subunit">
    <text evidence="1">PSII is composed of 1 copy each of membrane proteins PsbA, PsbB, PsbC, PsbD, PsbE, PsbF, PsbH, PsbI, PsbJ, PsbK, PsbL, PsbM, PsbT, PsbX, PsbY, PsbZ, Psb30/Ycf12, at least 3 peripheral proteins of the oxygen-evolving complex and a large number of cofactors. It forms dimeric complexes.</text>
</comment>
<comment type="subcellular location">
    <subcellularLocation>
        <location evidence="1">Plastid</location>
        <location evidence="1">Chloroplast thylakoid membrane</location>
        <topology evidence="1">Multi-pass membrane protein</topology>
    </subcellularLocation>
</comment>
<comment type="PTM">
    <text evidence="1">Tyr-161 forms a radical intermediate that is referred to as redox-active TyrZ, YZ or Y-Z.</text>
</comment>
<comment type="PTM">
    <text evidence="1">C-terminally processed by CTPA; processing is essential to allow assembly of the oxygen-evolving complex and thus photosynthetic growth.</text>
</comment>
<comment type="miscellaneous">
    <text evidence="1">2 of the reaction center chlorophylls (ChlD1 and ChlD2) are entirely coordinated by water.</text>
</comment>
<comment type="miscellaneous">
    <text evidence="1">Herbicides such as atrazine, BNT, diuron or ioxynil bind in the Q(B) binding site and block subsequent electron transfer.</text>
</comment>
<comment type="similarity">
    <text evidence="1">Belongs to the reaction center PufL/M/PsbA/D family.</text>
</comment>
<accession>Q5SCW8</accession>
<evidence type="ECO:0000255" key="1">
    <source>
        <dbReference type="HAMAP-Rule" id="MF_01379"/>
    </source>
</evidence>
<geneLocation type="chloroplast"/>
<sequence>MTATLERRESASLWGRFCDWVTSTENRLYIGWFGVLMIPTLLTATAVFIIAFIAAPPVDIDGIREPVSGSLLYGNNIISGAIIPTSAAIGLHFYPIWEAASVDEWLYNGGPYELIVLHFLLGVACYMGREWELSFRLGMRPWIAVAYSAPVAAAAAVFLIYPIGQGSFSDGMPLGISGTFNFMIVFQAEHNILMHPFHMLGVAGVFGGSLFSAMHGSLVTSSLIRETTENESANAGYKFGQEEETYNIVAAHGYFGRLIFQYASFNNSRSLHFFLAAWPVVGIWFTALGISTMAFNLNGFNFNQSVVDSQGRVINTWADIINRANLGMEVMHERNAHNFPLDLASVEAPSVNG</sequence>
<dbReference type="EC" id="1.10.3.9" evidence="1"/>
<dbReference type="EMBL" id="AY660566">
    <property type="protein sequence ID" value="AAT80732.1"/>
    <property type="molecule type" value="Genomic_DNA"/>
</dbReference>
<dbReference type="RefSeq" id="YP_209536.1">
    <property type="nucleotide sequence ID" value="NC_006861.1"/>
</dbReference>
<dbReference type="SMR" id="Q5SCW8"/>
<dbReference type="GeneID" id="3283837"/>
<dbReference type="GO" id="GO:0009535">
    <property type="term" value="C:chloroplast thylakoid membrane"/>
    <property type="evidence" value="ECO:0007669"/>
    <property type="project" value="UniProtKB-SubCell"/>
</dbReference>
<dbReference type="GO" id="GO:0009523">
    <property type="term" value="C:photosystem II"/>
    <property type="evidence" value="ECO:0007669"/>
    <property type="project" value="UniProtKB-KW"/>
</dbReference>
<dbReference type="GO" id="GO:0016168">
    <property type="term" value="F:chlorophyll binding"/>
    <property type="evidence" value="ECO:0007669"/>
    <property type="project" value="UniProtKB-UniRule"/>
</dbReference>
<dbReference type="GO" id="GO:0045156">
    <property type="term" value="F:electron transporter, transferring electrons within the cyclic electron transport pathway of photosynthesis activity"/>
    <property type="evidence" value="ECO:0007669"/>
    <property type="project" value="InterPro"/>
</dbReference>
<dbReference type="GO" id="GO:0005506">
    <property type="term" value="F:iron ion binding"/>
    <property type="evidence" value="ECO:0007669"/>
    <property type="project" value="UniProtKB-UniRule"/>
</dbReference>
<dbReference type="GO" id="GO:0016682">
    <property type="term" value="F:oxidoreductase activity, acting on diphenols and related substances as donors, oxygen as acceptor"/>
    <property type="evidence" value="ECO:0007669"/>
    <property type="project" value="UniProtKB-UniRule"/>
</dbReference>
<dbReference type="GO" id="GO:0010242">
    <property type="term" value="F:oxygen evolving activity"/>
    <property type="evidence" value="ECO:0007669"/>
    <property type="project" value="UniProtKB-EC"/>
</dbReference>
<dbReference type="GO" id="GO:0009772">
    <property type="term" value="P:photosynthetic electron transport in photosystem II"/>
    <property type="evidence" value="ECO:0007669"/>
    <property type="project" value="InterPro"/>
</dbReference>
<dbReference type="GO" id="GO:0009635">
    <property type="term" value="P:response to herbicide"/>
    <property type="evidence" value="ECO:0007669"/>
    <property type="project" value="UniProtKB-KW"/>
</dbReference>
<dbReference type="CDD" id="cd09289">
    <property type="entry name" value="Photosystem-II_D1"/>
    <property type="match status" value="1"/>
</dbReference>
<dbReference type="FunFam" id="1.20.85.10:FF:000002">
    <property type="entry name" value="Photosystem II protein D1"/>
    <property type="match status" value="1"/>
</dbReference>
<dbReference type="Gene3D" id="1.20.85.10">
    <property type="entry name" value="Photosystem II protein D1-like"/>
    <property type="match status" value="1"/>
</dbReference>
<dbReference type="HAMAP" id="MF_01379">
    <property type="entry name" value="PSII_PsbA_D1"/>
    <property type="match status" value="1"/>
</dbReference>
<dbReference type="InterPro" id="IPR055266">
    <property type="entry name" value="D1/D2"/>
</dbReference>
<dbReference type="InterPro" id="IPR036854">
    <property type="entry name" value="Photo_II_D1/D2_sf"/>
</dbReference>
<dbReference type="InterPro" id="IPR000484">
    <property type="entry name" value="Photo_RC_L/M"/>
</dbReference>
<dbReference type="InterPro" id="IPR055265">
    <property type="entry name" value="Photo_RC_L/M_CS"/>
</dbReference>
<dbReference type="InterPro" id="IPR005867">
    <property type="entry name" value="PSII_D1"/>
</dbReference>
<dbReference type="NCBIfam" id="TIGR01151">
    <property type="entry name" value="psbA"/>
    <property type="match status" value="1"/>
</dbReference>
<dbReference type="PANTHER" id="PTHR33149:SF12">
    <property type="entry name" value="PHOTOSYSTEM II D2 PROTEIN"/>
    <property type="match status" value="1"/>
</dbReference>
<dbReference type="PANTHER" id="PTHR33149">
    <property type="entry name" value="PHOTOSYSTEM II PROTEIN D1"/>
    <property type="match status" value="1"/>
</dbReference>
<dbReference type="Pfam" id="PF00124">
    <property type="entry name" value="Photo_RC"/>
    <property type="match status" value="1"/>
</dbReference>
<dbReference type="PRINTS" id="PR00256">
    <property type="entry name" value="REACTNCENTRE"/>
</dbReference>
<dbReference type="SUPFAM" id="SSF81483">
    <property type="entry name" value="Bacterial photosystem II reaction centre, L and M subunits"/>
    <property type="match status" value="1"/>
</dbReference>
<dbReference type="PROSITE" id="PS00244">
    <property type="entry name" value="REACTION_CENTER"/>
    <property type="match status" value="1"/>
</dbReference>
<keyword id="KW-0007">Acetylation</keyword>
<keyword id="KW-0106">Calcium</keyword>
<keyword id="KW-0148">Chlorophyll</keyword>
<keyword id="KW-0150">Chloroplast</keyword>
<keyword id="KW-0157">Chromophore</keyword>
<keyword id="KW-0249">Electron transport</keyword>
<keyword id="KW-0359">Herbicide resistance</keyword>
<keyword id="KW-0408">Iron</keyword>
<keyword id="KW-0460">Magnesium</keyword>
<keyword id="KW-0464">Manganese</keyword>
<keyword id="KW-0472">Membrane</keyword>
<keyword id="KW-0479">Metal-binding</keyword>
<keyword id="KW-0560">Oxidoreductase</keyword>
<keyword id="KW-0597">Phosphoprotein</keyword>
<keyword id="KW-0602">Photosynthesis</keyword>
<keyword id="KW-0604">Photosystem II</keyword>
<keyword id="KW-0934">Plastid</keyword>
<keyword id="KW-0793">Thylakoid</keyword>
<keyword id="KW-0812">Transmembrane</keyword>
<keyword id="KW-1133">Transmembrane helix</keyword>
<keyword id="KW-0813">Transport</keyword>
<protein>
    <recommendedName>
        <fullName evidence="1">Photosystem II protein D1</fullName>
        <shortName evidence="1">PSII D1 protein</shortName>
        <ecNumber evidence="1">1.10.3.9</ecNumber>
    </recommendedName>
    <alternativeName>
        <fullName evidence="1">Photosystem II Q(B) protein</fullName>
    </alternativeName>
</protein>
<proteinExistence type="inferred from homology"/>
<name>PSBA_HUPLU</name>
<reference key="1">
    <citation type="journal article" date="2005" name="Gene">
        <title>The first complete chloroplast genome sequence of a lycophyte, Huperzia lucidula (Lycopodiaceae).</title>
        <authorList>
            <person name="Wolf P.G."/>
            <person name="Karol K.G."/>
            <person name="Mandoli D.F."/>
            <person name="Kuehl J.V."/>
            <person name="Arumuganathan K."/>
            <person name="Ellis M.W."/>
            <person name="Mishler B.D."/>
            <person name="Kelch D.G."/>
            <person name="Olmstead R.G."/>
            <person name="Boore J.L."/>
        </authorList>
    </citation>
    <scope>NUCLEOTIDE SEQUENCE [LARGE SCALE GENOMIC DNA]</scope>
</reference>
<organism>
    <name type="scientific">Huperzia lucidula</name>
    <name type="common">Shining clubmoss</name>
    <name type="synonym">Lycopodium lucidulum</name>
    <dbReference type="NCBI Taxonomy" id="37429"/>
    <lineage>
        <taxon>Eukaryota</taxon>
        <taxon>Viridiplantae</taxon>
        <taxon>Streptophyta</taxon>
        <taxon>Embryophyta</taxon>
        <taxon>Tracheophyta</taxon>
        <taxon>Lycopodiopsida</taxon>
        <taxon>Lycopodiales</taxon>
        <taxon>Lycopodiaceae</taxon>
        <taxon>Huperzioideae</taxon>
        <taxon>Huperzia</taxon>
    </lineage>
</organism>
<feature type="initiator methionine" description="Removed" evidence="1">
    <location>
        <position position="1"/>
    </location>
</feature>
<feature type="chain" id="PRO_0000339999" description="Photosystem II protein D1" evidence="1">
    <location>
        <begin position="2"/>
        <end position="344"/>
    </location>
</feature>
<feature type="propeptide" id="PRO_0000340000" evidence="1">
    <location>
        <begin position="345"/>
        <end position="353"/>
    </location>
</feature>
<feature type="transmembrane region" description="Helical" evidence="1">
    <location>
        <begin position="29"/>
        <end position="46"/>
    </location>
</feature>
<feature type="transmembrane region" description="Helical" evidence="1">
    <location>
        <begin position="118"/>
        <end position="133"/>
    </location>
</feature>
<feature type="transmembrane region" description="Helical" evidence="1">
    <location>
        <begin position="142"/>
        <end position="156"/>
    </location>
</feature>
<feature type="transmembrane region" description="Helical" evidence="1">
    <location>
        <begin position="197"/>
        <end position="218"/>
    </location>
</feature>
<feature type="transmembrane region" description="Helical" evidence="1">
    <location>
        <begin position="274"/>
        <end position="288"/>
    </location>
</feature>
<feature type="binding site" description="axial binding residue" evidence="1">
    <location>
        <position position="118"/>
    </location>
    <ligand>
        <name>chlorophyll a</name>
        <dbReference type="ChEBI" id="CHEBI:58416"/>
        <label>ChlzD1</label>
    </ligand>
    <ligandPart>
        <name>Mg</name>
        <dbReference type="ChEBI" id="CHEBI:25107"/>
    </ligandPart>
</feature>
<feature type="binding site" evidence="1">
    <location>
        <position position="126"/>
    </location>
    <ligand>
        <name>pheophytin a</name>
        <dbReference type="ChEBI" id="CHEBI:136840"/>
        <label>D1</label>
    </ligand>
</feature>
<feature type="binding site" evidence="1">
    <location>
        <position position="170"/>
    </location>
    <ligand>
        <name>[CaMn4O5] cluster</name>
        <dbReference type="ChEBI" id="CHEBI:189552"/>
    </ligand>
</feature>
<feature type="binding site" evidence="1">
    <location>
        <position position="189"/>
    </location>
    <ligand>
        <name>[CaMn4O5] cluster</name>
        <dbReference type="ChEBI" id="CHEBI:189552"/>
    </ligand>
</feature>
<feature type="binding site" description="axial binding residue" evidence="1">
    <location>
        <position position="198"/>
    </location>
    <ligand>
        <name>chlorophyll a</name>
        <dbReference type="ChEBI" id="CHEBI:58416"/>
        <label>PD1</label>
    </ligand>
    <ligandPart>
        <name>Mg</name>
        <dbReference type="ChEBI" id="CHEBI:25107"/>
    </ligandPart>
</feature>
<feature type="binding site" evidence="1">
    <location>
        <position position="215"/>
    </location>
    <ligand>
        <name>a quinone</name>
        <dbReference type="ChEBI" id="CHEBI:132124"/>
        <label>B</label>
    </ligand>
</feature>
<feature type="binding site" evidence="1">
    <location>
        <position position="215"/>
    </location>
    <ligand>
        <name>Fe cation</name>
        <dbReference type="ChEBI" id="CHEBI:24875"/>
        <note>ligand shared with heterodimeric partner</note>
    </ligand>
</feature>
<feature type="binding site" evidence="1">
    <location>
        <begin position="264"/>
        <end position="265"/>
    </location>
    <ligand>
        <name>a quinone</name>
        <dbReference type="ChEBI" id="CHEBI:132124"/>
        <label>B</label>
    </ligand>
</feature>
<feature type="binding site" evidence="1">
    <location>
        <position position="272"/>
    </location>
    <ligand>
        <name>Fe cation</name>
        <dbReference type="ChEBI" id="CHEBI:24875"/>
        <note>ligand shared with heterodimeric partner</note>
    </ligand>
</feature>
<feature type="binding site" evidence="1">
    <location>
        <position position="332"/>
    </location>
    <ligand>
        <name>[CaMn4O5] cluster</name>
        <dbReference type="ChEBI" id="CHEBI:189552"/>
    </ligand>
</feature>
<feature type="binding site" evidence="1">
    <location>
        <position position="333"/>
    </location>
    <ligand>
        <name>[CaMn4O5] cluster</name>
        <dbReference type="ChEBI" id="CHEBI:189552"/>
    </ligand>
</feature>
<feature type="binding site" evidence="1">
    <location>
        <position position="342"/>
    </location>
    <ligand>
        <name>[CaMn4O5] cluster</name>
        <dbReference type="ChEBI" id="CHEBI:189552"/>
    </ligand>
</feature>
<feature type="binding site" evidence="1">
    <location>
        <position position="344"/>
    </location>
    <ligand>
        <name>[CaMn4O5] cluster</name>
        <dbReference type="ChEBI" id="CHEBI:189552"/>
    </ligand>
</feature>
<feature type="site" description="Tyrosine radical intermediate" evidence="1">
    <location>
        <position position="161"/>
    </location>
</feature>
<feature type="site" description="Stabilizes free radical intermediate" evidence="1">
    <location>
        <position position="190"/>
    </location>
</feature>
<feature type="site" description="Cleavage; by CTPA" evidence="1">
    <location>
        <begin position="344"/>
        <end position="345"/>
    </location>
</feature>
<feature type="modified residue" description="N-acetylthreonine" evidence="1">
    <location>
        <position position="2"/>
    </location>
</feature>
<feature type="modified residue" description="Phosphothreonine" evidence="1">
    <location>
        <position position="2"/>
    </location>
</feature>